<reference evidence="4 6" key="1">
    <citation type="journal article" date="2003" name="Dev. Biol.">
        <title>Cloning and characterization of Xenopus Id4 reveals differing roles for Id genes.</title>
        <authorList>
            <person name="Liu K.J."/>
            <person name="Harland R.M."/>
        </authorList>
    </citation>
    <scope>NUCLEOTIDE SEQUENCE [MRNA]</scope>
    <scope>FUNCTION</scope>
    <scope>TISSUE SPECIFICITY</scope>
    <scope>INDUCTION</scope>
</reference>
<reference evidence="7" key="2">
    <citation type="submission" date="2003-07" db="EMBL/GenBank/DDBJ databases">
        <title>Cloning and expression of Xenopus inhibitor of DNA binding 4 (Id4).</title>
        <authorList>
            <person name="Tribulo C."/>
            <person name="Aybar M.J."/>
        </authorList>
    </citation>
    <scope>NUCLEOTIDE SEQUENCE [MRNA]</scope>
</reference>
<reference evidence="7" key="3">
    <citation type="submission" date="2003-01" db="EMBL/GenBank/DDBJ databases">
        <authorList>
            <consortium name="NIH - Xenopus Gene Collection (XGC) project"/>
        </authorList>
    </citation>
    <scope>NUCLEOTIDE SEQUENCE [LARGE SCALE MRNA]</scope>
    <source>
        <tissue evidence="5">Tail bud</tissue>
    </source>
</reference>
<sequence>MKAVSPVRPQSRKAQVPSVCGELALHCLSEHSLGVARYKMEEEETLCLQYDMNDCYSRLKRLVPTIPPNKKVSKVEILQHVIDYILDLQLALDTHPVLLRQQPPTRTPLTDLNTDPAALVVNKQGDSILCR</sequence>
<name>ID4_XENLA</name>
<comment type="function">
    <text evidence="3">Transcriptional regulator (lacking a basic DNA binding domain) which negatively regulates the basic helix-loop-helix (bHLH) transcription factors by forming heterodimers and inhibiting their DNA binding and transcriptional activity. Inhibits the activity of both neurogenic (neurog1/neurogenin, neurod1/neuroD) and myogenic (myod1/myoD) bHLH factors.</text>
</comment>
<comment type="subunit">
    <text evidence="1">Heterodimer with other HLH proteins.</text>
</comment>
<comment type="subcellular location">
    <subcellularLocation>
        <location evidence="1 2">Nucleus</location>
    </subcellularLocation>
</comment>
<comment type="tissue specificity">
    <text evidence="3">During embryonic development, expressed in a number of neural tissues, including Rohon-Beard neurons, olfactory placode, eye primordia, and the trigeminal ganglia. Also expressed in other organs including the pronephros and liver primordium. Pronephric development begins by stage 25 and increases during tailbud stages. Expressed in both the tubules and the duct. As embryogenesis progresses, expressed in the migrating melanocytes and lateral line structures.</text>
</comment>
<comment type="induction">
    <text evidence="3">By bmp4. Inhibited by Notch-signaling.</text>
</comment>
<dbReference type="EMBL" id="AY279210">
    <property type="protein sequence ID" value="AAP34250.1"/>
    <property type="molecule type" value="mRNA"/>
</dbReference>
<dbReference type="EMBL" id="AY350743">
    <property type="protein sequence ID" value="AAR06889.1"/>
    <property type="molecule type" value="mRNA"/>
</dbReference>
<dbReference type="EMBL" id="BC045022">
    <property type="protein sequence ID" value="AAH45022.1"/>
    <property type="molecule type" value="mRNA"/>
</dbReference>
<dbReference type="RefSeq" id="NP_001080704.1">
    <property type="nucleotide sequence ID" value="NM_001087235.1"/>
</dbReference>
<dbReference type="RefSeq" id="NP_001165446.1">
    <property type="nucleotide sequence ID" value="NM_001171975.1"/>
</dbReference>
<dbReference type="RefSeq" id="XP_018121666.1">
    <property type="nucleotide sequence ID" value="XM_018266177.1"/>
</dbReference>
<dbReference type="SMR" id="Q7ZXF3"/>
<dbReference type="DNASU" id="380396"/>
<dbReference type="GeneID" id="100337509"/>
<dbReference type="GeneID" id="380396"/>
<dbReference type="KEGG" id="xla:100337509"/>
<dbReference type="KEGG" id="xla:380396"/>
<dbReference type="AGR" id="Xenbase:XB-GENE-6464374"/>
<dbReference type="CTD" id="100337509"/>
<dbReference type="CTD" id="380396"/>
<dbReference type="Xenbase" id="XB-GENE-6464374">
    <property type="gene designation" value="id4.L"/>
</dbReference>
<dbReference type="OMA" id="FNIARCR"/>
<dbReference type="OrthoDB" id="10047910at2759"/>
<dbReference type="Proteomes" id="UP000186698">
    <property type="component" value="Chromosome 6L"/>
</dbReference>
<dbReference type="Proteomes" id="UP000186698">
    <property type="component" value="Chromosome 6S"/>
</dbReference>
<dbReference type="Bgee" id="100337509">
    <property type="expression patterns" value="Expressed in brain and 16 other cell types or tissues"/>
</dbReference>
<dbReference type="GO" id="GO:0005737">
    <property type="term" value="C:cytoplasm"/>
    <property type="evidence" value="ECO:0007669"/>
    <property type="project" value="InterPro"/>
</dbReference>
<dbReference type="GO" id="GO:0005634">
    <property type="term" value="C:nucleus"/>
    <property type="evidence" value="ECO:0000318"/>
    <property type="project" value="GO_Central"/>
</dbReference>
<dbReference type="GO" id="GO:0043425">
    <property type="term" value="F:bHLH transcription factor binding"/>
    <property type="evidence" value="ECO:0000250"/>
    <property type="project" value="UniProtKB"/>
</dbReference>
<dbReference type="GO" id="GO:0046983">
    <property type="term" value="F:protein dimerization activity"/>
    <property type="evidence" value="ECO:0007669"/>
    <property type="project" value="InterPro"/>
</dbReference>
<dbReference type="GO" id="GO:0003714">
    <property type="term" value="F:transcription corepressor activity"/>
    <property type="evidence" value="ECO:0000318"/>
    <property type="project" value="GO_Central"/>
</dbReference>
<dbReference type="GO" id="GO:0032922">
    <property type="term" value="P:circadian regulation of gene expression"/>
    <property type="evidence" value="ECO:0007669"/>
    <property type="project" value="TreeGrafter"/>
</dbReference>
<dbReference type="GO" id="GO:0000122">
    <property type="term" value="P:negative regulation of transcription by RNA polymerase II"/>
    <property type="evidence" value="ECO:0000314"/>
    <property type="project" value="UniProtKB"/>
</dbReference>
<dbReference type="GO" id="GO:0030182">
    <property type="term" value="P:neuron differentiation"/>
    <property type="evidence" value="ECO:0000318"/>
    <property type="project" value="GO_Central"/>
</dbReference>
<dbReference type="CDD" id="cd19694">
    <property type="entry name" value="bHLH_dnHLH_ID4"/>
    <property type="match status" value="1"/>
</dbReference>
<dbReference type="FunFam" id="4.10.280.10:FF:000048">
    <property type="entry name" value="DNA-binding protein inhibitor ID-4"/>
    <property type="match status" value="1"/>
</dbReference>
<dbReference type="Gene3D" id="4.10.280.10">
    <property type="entry name" value="Helix-loop-helix DNA-binding domain"/>
    <property type="match status" value="1"/>
</dbReference>
<dbReference type="InterPro" id="IPR011598">
    <property type="entry name" value="bHLH_dom"/>
</dbReference>
<dbReference type="InterPro" id="IPR026052">
    <property type="entry name" value="DNA-bd_prot-inh"/>
</dbReference>
<dbReference type="InterPro" id="IPR036638">
    <property type="entry name" value="HLH_DNA-bd_sf"/>
</dbReference>
<dbReference type="PANTHER" id="PTHR11723">
    <property type="entry name" value="DNA-BINDING PROTEIN INHIBITOR"/>
    <property type="match status" value="1"/>
</dbReference>
<dbReference type="PANTHER" id="PTHR11723:SF6">
    <property type="entry name" value="DNA-BINDING PROTEIN INHIBITOR ID-4"/>
    <property type="match status" value="1"/>
</dbReference>
<dbReference type="Pfam" id="PF00010">
    <property type="entry name" value="HLH"/>
    <property type="match status" value="1"/>
</dbReference>
<dbReference type="SMART" id="SM00353">
    <property type="entry name" value="HLH"/>
    <property type="match status" value="1"/>
</dbReference>
<dbReference type="SUPFAM" id="SSF47459">
    <property type="entry name" value="HLH, helix-loop-helix DNA-binding domain"/>
    <property type="match status" value="1"/>
</dbReference>
<dbReference type="PROSITE" id="PS50888">
    <property type="entry name" value="BHLH"/>
    <property type="match status" value="1"/>
</dbReference>
<protein>
    <recommendedName>
        <fullName evidence="1">DNA-binding protein inhibitor ID-4</fullName>
    </recommendedName>
    <alternativeName>
        <fullName evidence="7">Inhibitor of DNA binding 4</fullName>
    </alternativeName>
    <alternativeName>
        <fullName>Inhibitor of differentiation 4</fullName>
    </alternativeName>
</protein>
<gene>
    <name evidence="6" type="primary">id4</name>
    <name type="synonym">idb4</name>
</gene>
<organism>
    <name type="scientific">Xenopus laevis</name>
    <name type="common">African clawed frog</name>
    <dbReference type="NCBI Taxonomy" id="8355"/>
    <lineage>
        <taxon>Eukaryota</taxon>
        <taxon>Metazoa</taxon>
        <taxon>Chordata</taxon>
        <taxon>Craniata</taxon>
        <taxon>Vertebrata</taxon>
        <taxon>Euteleostomi</taxon>
        <taxon>Amphibia</taxon>
        <taxon>Batrachia</taxon>
        <taxon>Anura</taxon>
        <taxon>Pipoidea</taxon>
        <taxon>Pipidae</taxon>
        <taxon>Xenopodinae</taxon>
        <taxon>Xenopus</taxon>
        <taxon>Xenopus</taxon>
    </lineage>
</organism>
<accession>Q7ZXF3</accession>
<accession>Q7ZZB5</accession>
<feature type="chain" id="PRO_0000390727" description="DNA-binding protein inhibitor ID-4">
    <location>
        <begin position="1"/>
        <end position="131"/>
    </location>
</feature>
<feature type="domain" description="bHLH" evidence="2">
    <location>
        <begin position="36"/>
        <end position="88"/>
    </location>
</feature>
<feature type="sequence conflict" description="In Ref. 1; AAP34250." evidence="4" ref="1">
    <original>Y</original>
    <variation>F</variation>
    <location>
        <position position="38"/>
    </location>
</feature>
<keyword id="KW-0217">Developmental protein</keyword>
<keyword id="KW-0539">Nucleus</keyword>
<keyword id="KW-1185">Reference proteome</keyword>
<keyword id="KW-0678">Repressor</keyword>
<keyword id="KW-0804">Transcription</keyword>
<keyword id="KW-0805">Transcription regulation</keyword>
<proteinExistence type="evidence at transcript level"/>
<evidence type="ECO:0000250" key="1">
    <source>
        <dbReference type="UniProtKB" id="P47928"/>
    </source>
</evidence>
<evidence type="ECO:0000255" key="2">
    <source>
        <dbReference type="PROSITE-ProRule" id="PRU00981"/>
    </source>
</evidence>
<evidence type="ECO:0000269" key="3">
    <source>
    </source>
</evidence>
<evidence type="ECO:0000305" key="4"/>
<evidence type="ECO:0000312" key="5">
    <source>
        <dbReference type="EMBL" id="AAH45022.1"/>
    </source>
</evidence>
<evidence type="ECO:0000312" key="6">
    <source>
        <dbReference type="EMBL" id="AAP34250.1"/>
    </source>
</evidence>
<evidence type="ECO:0000312" key="7">
    <source>
        <dbReference type="EMBL" id="AAR06889.1"/>
    </source>
</evidence>